<evidence type="ECO:0000255" key="1">
    <source>
        <dbReference type="HAMAP-Rule" id="MF_00503"/>
    </source>
</evidence>
<evidence type="ECO:0000305" key="2"/>
<accession>B9KJP2</accession>
<gene>
    <name evidence="1" type="primary">rplI</name>
    <name type="ordered locus">RSKD131_1479</name>
</gene>
<name>RL9_CERSK</name>
<dbReference type="EMBL" id="CP001150">
    <property type="protein sequence ID" value="ACM01339.1"/>
    <property type="molecule type" value="Genomic_DNA"/>
</dbReference>
<dbReference type="RefSeq" id="WP_002720284.1">
    <property type="nucleotide sequence ID" value="NC_011963.1"/>
</dbReference>
<dbReference type="SMR" id="B9KJP2"/>
<dbReference type="GeneID" id="67446889"/>
<dbReference type="KEGG" id="rsk:RSKD131_1479"/>
<dbReference type="HOGENOM" id="CLU_078938_1_0_5"/>
<dbReference type="GO" id="GO:1990904">
    <property type="term" value="C:ribonucleoprotein complex"/>
    <property type="evidence" value="ECO:0007669"/>
    <property type="project" value="UniProtKB-KW"/>
</dbReference>
<dbReference type="GO" id="GO:0005840">
    <property type="term" value="C:ribosome"/>
    <property type="evidence" value="ECO:0007669"/>
    <property type="project" value="UniProtKB-KW"/>
</dbReference>
<dbReference type="GO" id="GO:0019843">
    <property type="term" value="F:rRNA binding"/>
    <property type="evidence" value="ECO:0007669"/>
    <property type="project" value="UniProtKB-UniRule"/>
</dbReference>
<dbReference type="GO" id="GO:0003735">
    <property type="term" value="F:structural constituent of ribosome"/>
    <property type="evidence" value="ECO:0007669"/>
    <property type="project" value="InterPro"/>
</dbReference>
<dbReference type="GO" id="GO:0006412">
    <property type="term" value="P:translation"/>
    <property type="evidence" value="ECO:0007669"/>
    <property type="project" value="UniProtKB-UniRule"/>
</dbReference>
<dbReference type="Gene3D" id="3.10.430.100">
    <property type="entry name" value="Ribosomal protein L9, C-terminal domain"/>
    <property type="match status" value="1"/>
</dbReference>
<dbReference type="Gene3D" id="3.40.5.10">
    <property type="entry name" value="Ribosomal protein L9, N-terminal domain"/>
    <property type="match status" value="1"/>
</dbReference>
<dbReference type="HAMAP" id="MF_00503">
    <property type="entry name" value="Ribosomal_bL9"/>
    <property type="match status" value="1"/>
</dbReference>
<dbReference type="InterPro" id="IPR000244">
    <property type="entry name" value="Ribosomal_bL9"/>
</dbReference>
<dbReference type="InterPro" id="IPR009027">
    <property type="entry name" value="Ribosomal_bL9/RNase_H1_N"/>
</dbReference>
<dbReference type="InterPro" id="IPR020594">
    <property type="entry name" value="Ribosomal_bL9_bac/chp"/>
</dbReference>
<dbReference type="InterPro" id="IPR020069">
    <property type="entry name" value="Ribosomal_bL9_C"/>
</dbReference>
<dbReference type="InterPro" id="IPR036791">
    <property type="entry name" value="Ribosomal_bL9_C_sf"/>
</dbReference>
<dbReference type="InterPro" id="IPR020070">
    <property type="entry name" value="Ribosomal_bL9_N"/>
</dbReference>
<dbReference type="InterPro" id="IPR036935">
    <property type="entry name" value="Ribosomal_bL9_N_sf"/>
</dbReference>
<dbReference type="NCBIfam" id="TIGR00158">
    <property type="entry name" value="L9"/>
    <property type="match status" value="1"/>
</dbReference>
<dbReference type="PANTHER" id="PTHR21368">
    <property type="entry name" value="50S RIBOSOMAL PROTEIN L9"/>
    <property type="match status" value="1"/>
</dbReference>
<dbReference type="Pfam" id="PF03948">
    <property type="entry name" value="Ribosomal_L9_C"/>
    <property type="match status" value="1"/>
</dbReference>
<dbReference type="Pfam" id="PF01281">
    <property type="entry name" value="Ribosomal_L9_N"/>
    <property type="match status" value="1"/>
</dbReference>
<dbReference type="SUPFAM" id="SSF55658">
    <property type="entry name" value="L9 N-domain-like"/>
    <property type="match status" value="1"/>
</dbReference>
<dbReference type="SUPFAM" id="SSF55653">
    <property type="entry name" value="Ribosomal protein L9 C-domain"/>
    <property type="match status" value="1"/>
</dbReference>
<dbReference type="PROSITE" id="PS00651">
    <property type="entry name" value="RIBOSOMAL_L9"/>
    <property type="match status" value="1"/>
</dbReference>
<organism>
    <name type="scientific">Cereibacter sphaeroides (strain KD131 / KCTC 12085)</name>
    <name type="common">Rhodobacter sphaeroides</name>
    <dbReference type="NCBI Taxonomy" id="557760"/>
    <lineage>
        <taxon>Bacteria</taxon>
        <taxon>Pseudomonadati</taxon>
        <taxon>Pseudomonadota</taxon>
        <taxon>Alphaproteobacteria</taxon>
        <taxon>Rhodobacterales</taxon>
        <taxon>Paracoccaceae</taxon>
        <taxon>Cereibacter</taxon>
    </lineage>
</organism>
<sequence>MQVILLQRVAKLGQMGEVVNVKDGYARNFLLPQGKALRANESNIKSFEARKAQLEAQNLETKKEAAAVAEKLDGQSFVVIRSASDSGALYGSVTTRDAAEAATEAGFTVGRGQIVLDRPIKDLGLHTVTVTLHPEVVVKITLNVARSVEEAELQASGKSIQELAAEAEAAADFEIAELFDEIGAASQDD</sequence>
<keyword id="KW-0687">Ribonucleoprotein</keyword>
<keyword id="KW-0689">Ribosomal protein</keyword>
<keyword id="KW-0694">RNA-binding</keyword>
<keyword id="KW-0699">rRNA-binding</keyword>
<feature type="chain" id="PRO_1000196260" description="Large ribosomal subunit protein bL9">
    <location>
        <begin position="1"/>
        <end position="189"/>
    </location>
</feature>
<proteinExistence type="inferred from homology"/>
<comment type="function">
    <text evidence="1">Binds to the 23S rRNA.</text>
</comment>
<comment type="similarity">
    <text evidence="1">Belongs to the bacterial ribosomal protein bL9 family.</text>
</comment>
<protein>
    <recommendedName>
        <fullName evidence="1">Large ribosomal subunit protein bL9</fullName>
    </recommendedName>
    <alternativeName>
        <fullName evidence="2">50S ribosomal protein L9</fullName>
    </alternativeName>
</protein>
<reference key="1">
    <citation type="journal article" date="2009" name="J. Bacteriol.">
        <title>Complete genome sequence of Rhodobacter sphaeroides KD131.</title>
        <authorList>
            <person name="Lim S.-K."/>
            <person name="Kim S.J."/>
            <person name="Cha S.H."/>
            <person name="Oh Y.-K."/>
            <person name="Rhee H.-J."/>
            <person name="Kim M.-S."/>
            <person name="Lee J.K."/>
        </authorList>
    </citation>
    <scope>NUCLEOTIDE SEQUENCE [LARGE SCALE GENOMIC DNA]</scope>
    <source>
        <strain>KD131 / KCTC 12085</strain>
    </source>
</reference>